<proteinExistence type="predicted"/>
<reference key="1">
    <citation type="journal article" date="1989" name="Mol. Gen. Genet.">
        <title>Characterization and nucleotide sequence of a novel gene fixW upstream of the fixABC operon in Rhizobium leguminosarum.</title>
        <authorList>
            <person name="Hontelez J.G.J."/>
            <person name="Lankhorst R.K."/>
            <person name="Katinakis P."/>
            <person name="van den Bos R.C."/>
            <person name="van Kammen A."/>
        </authorList>
    </citation>
    <scope>NUCLEOTIDE SEQUENCE [GENOMIC DNA]</scope>
</reference>
<feature type="chain" id="PRO_0000066221" description="Uncharacterized 8.8 kDa protein in fixW 5'region">
    <location>
        <begin position="1"/>
        <end position="79"/>
    </location>
</feature>
<organism>
    <name type="scientific">Rhizobium leguminosarum</name>
    <dbReference type="NCBI Taxonomy" id="384"/>
    <lineage>
        <taxon>Bacteria</taxon>
        <taxon>Pseudomonadati</taxon>
        <taxon>Pseudomonadota</taxon>
        <taxon>Alphaproteobacteria</taxon>
        <taxon>Hyphomicrobiales</taxon>
        <taxon>Rhizobiaceae</taxon>
        <taxon>Rhizobium/Agrobacterium group</taxon>
        <taxon>Rhizobium</taxon>
    </lineage>
</organism>
<protein>
    <recommendedName>
        <fullName>Uncharacterized 8.8 kDa protein in fixW 5'region</fullName>
    </recommendedName>
</protein>
<accession>P14311</accession>
<sequence>MASCCICIRPRHLPVTTVTIVTLSEERIRNVTHPQKPFQKTRSPAFVVQPMERAPLFEIGATRADTWPEGLIPRARSGP</sequence>
<dbReference type="EMBL" id="X16521">
    <property type="protein sequence ID" value="CAA34526.1"/>
    <property type="molecule type" value="Genomic_DNA"/>
</dbReference>
<dbReference type="PIR" id="JQ0312">
    <property type="entry name" value="JQ0312"/>
</dbReference>
<name>YFX2_RHILE</name>